<proteinExistence type="inferred from homology"/>
<organism>
    <name type="scientific">Marinomonas sp. (strain MWYL1)</name>
    <dbReference type="NCBI Taxonomy" id="400668"/>
    <lineage>
        <taxon>Bacteria</taxon>
        <taxon>Pseudomonadati</taxon>
        <taxon>Pseudomonadota</taxon>
        <taxon>Gammaproteobacteria</taxon>
        <taxon>Oceanospirillales</taxon>
        <taxon>Oceanospirillaceae</taxon>
        <taxon>Marinomonas</taxon>
    </lineage>
</organism>
<feature type="chain" id="PRO_1000079591" description="DNA replication and repair protein RecF">
    <location>
        <begin position="1"/>
        <end position="368"/>
    </location>
</feature>
<feature type="binding site" evidence="1">
    <location>
        <begin position="30"/>
        <end position="37"/>
    </location>
    <ligand>
        <name>ATP</name>
        <dbReference type="ChEBI" id="CHEBI:30616"/>
    </ligand>
</feature>
<evidence type="ECO:0000255" key="1">
    <source>
        <dbReference type="HAMAP-Rule" id="MF_00365"/>
    </source>
</evidence>
<sequence>MPLVRLDISHVRNLSSVRFEPSPQVNVIVGKNGSGKTSVLEAIHLLSFGRSFRSHKHKTYIQHENDACIVFAQLHQKQGSPIRVGLQRHRDGQIDVRIQGQRAQSVIELAERLPVQLINPDAFRLLEGSPSIRRQFIDWGAFHFDKDFIQAWRGWQKALKQRNTLLRRGKISLSLLAAFDQELIRLGEQVNQSRKAYVEKLTPHFVKVLSLLTTELSVSLQFFQGWDAQKNLAMAVEAGRERDIELGYTHTGPQRADLRVKTATGDALDTLSRGQQKLVVSALKIAQGQLLIDMGRPLVFLVDDLPAELDANHRQKLCQLLESLNSQIFITSVEPDTTDFTWADTTDVRQFSMTNGELSLLSKGLQES</sequence>
<accession>A6VR67</accession>
<keyword id="KW-0067">ATP-binding</keyword>
<keyword id="KW-0963">Cytoplasm</keyword>
<keyword id="KW-0227">DNA damage</keyword>
<keyword id="KW-0234">DNA repair</keyword>
<keyword id="KW-0235">DNA replication</keyword>
<keyword id="KW-0238">DNA-binding</keyword>
<keyword id="KW-0547">Nucleotide-binding</keyword>
<keyword id="KW-0742">SOS response</keyword>
<name>RECF_MARMS</name>
<protein>
    <recommendedName>
        <fullName evidence="1">DNA replication and repair protein RecF</fullName>
    </recommendedName>
</protein>
<dbReference type="EMBL" id="CP000749">
    <property type="protein sequence ID" value="ABR68946.1"/>
    <property type="molecule type" value="Genomic_DNA"/>
</dbReference>
<dbReference type="SMR" id="A6VR67"/>
<dbReference type="STRING" id="400668.Mmwyl1_0003"/>
<dbReference type="KEGG" id="mmw:Mmwyl1_0003"/>
<dbReference type="eggNOG" id="COG1195">
    <property type="taxonomic scope" value="Bacteria"/>
</dbReference>
<dbReference type="HOGENOM" id="CLU_040267_0_0_6"/>
<dbReference type="OrthoDB" id="9803889at2"/>
<dbReference type="GO" id="GO:0005737">
    <property type="term" value="C:cytoplasm"/>
    <property type="evidence" value="ECO:0007669"/>
    <property type="project" value="UniProtKB-SubCell"/>
</dbReference>
<dbReference type="GO" id="GO:0005524">
    <property type="term" value="F:ATP binding"/>
    <property type="evidence" value="ECO:0007669"/>
    <property type="project" value="UniProtKB-UniRule"/>
</dbReference>
<dbReference type="GO" id="GO:0003697">
    <property type="term" value="F:single-stranded DNA binding"/>
    <property type="evidence" value="ECO:0007669"/>
    <property type="project" value="UniProtKB-UniRule"/>
</dbReference>
<dbReference type="GO" id="GO:0006260">
    <property type="term" value="P:DNA replication"/>
    <property type="evidence" value="ECO:0007669"/>
    <property type="project" value="UniProtKB-UniRule"/>
</dbReference>
<dbReference type="GO" id="GO:0000731">
    <property type="term" value="P:DNA synthesis involved in DNA repair"/>
    <property type="evidence" value="ECO:0007669"/>
    <property type="project" value="TreeGrafter"/>
</dbReference>
<dbReference type="GO" id="GO:0006302">
    <property type="term" value="P:double-strand break repair"/>
    <property type="evidence" value="ECO:0007669"/>
    <property type="project" value="TreeGrafter"/>
</dbReference>
<dbReference type="GO" id="GO:0009432">
    <property type="term" value="P:SOS response"/>
    <property type="evidence" value="ECO:0007669"/>
    <property type="project" value="UniProtKB-UniRule"/>
</dbReference>
<dbReference type="Gene3D" id="3.40.50.300">
    <property type="entry name" value="P-loop containing nucleotide triphosphate hydrolases"/>
    <property type="match status" value="1"/>
</dbReference>
<dbReference type="Gene3D" id="1.20.1050.90">
    <property type="entry name" value="RecF/RecN/SMC, N-terminal domain"/>
    <property type="match status" value="1"/>
</dbReference>
<dbReference type="HAMAP" id="MF_00365">
    <property type="entry name" value="RecF"/>
    <property type="match status" value="1"/>
</dbReference>
<dbReference type="InterPro" id="IPR001238">
    <property type="entry name" value="DNA-binding_RecF"/>
</dbReference>
<dbReference type="InterPro" id="IPR018078">
    <property type="entry name" value="DNA-binding_RecF_CS"/>
</dbReference>
<dbReference type="InterPro" id="IPR027417">
    <property type="entry name" value="P-loop_NTPase"/>
</dbReference>
<dbReference type="InterPro" id="IPR003395">
    <property type="entry name" value="RecF/RecN/SMC_N"/>
</dbReference>
<dbReference type="InterPro" id="IPR042174">
    <property type="entry name" value="RecF_2"/>
</dbReference>
<dbReference type="NCBIfam" id="TIGR00611">
    <property type="entry name" value="recf"/>
    <property type="match status" value="1"/>
</dbReference>
<dbReference type="PANTHER" id="PTHR32182">
    <property type="entry name" value="DNA REPLICATION AND REPAIR PROTEIN RECF"/>
    <property type="match status" value="1"/>
</dbReference>
<dbReference type="PANTHER" id="PTHR32182:SF0">
    <property type="entry name" value="DNA REPLICATION AND REPAIR PROTEIN RECF"/>
    <property type="match status" value="1"/>
</dbReference>
<dbReference type="Pfam" id="PF02463">
    <property type="entry name" value="SMC_N"/>
    <property type="match status" value="1"/>
</dbReference>
<dbReference type="SUPFAM" id="SSF52540">
    <property type="entry name" value="P-loop containing nucleoside triphosphate hydrolases"/>
    <property type="match status" value="1"/>
</dbReference>
<dbReference type="PROSITE" id="PS00617">
    <property type="entry name" value="RECF_1"/>
    <property type="match status" value="1"/>
</dbReference>
<dbReference type="PROSITE" id="PS00618">
    <property type="entry name" value="RECF_2"/>
    <property type="match status" value="1"/>
</dbReference>
<reference key="1">
    <citation type="submission" date="2007-06" db="EMBL/GenBank/DDBJ databases">
        <title>Complete sequence of Marinomonas sp. MWYL1.</title>
        <authorList>
            <consortium name="US DOE Joint Genome Institute"/>
            <person name="Copeland A."/>
            <person name="Lucas S."/>
            <person name="Lapidus A."/>
            <person name="Barry K."/>
            <person name="Glavina del Rio T."/>
            <person name="Dalin E."/>
            <person name="Tice H."/>
            <person name="Pitluck S."/>
            <person name="Kiss H."/>
            <person name="Brettin T."/>
            <person name="Bruce D."/>
            <person name="Detter J.C."/>
            <person name="Han C."/>
            <person name="Schmutz J."/>
            <person name="Larimer F."/>
            <person name="Land M."/>
            <person name="Hauser L."/>
            <person name="Kyrpides N."/>
            <person name="Kim E."/>
            <person name="Johnston A.W.B."/>
            <person name="Todd J.D."/>
            <person name="Rogers R."/>
            <person name="Wexler M."/>
            <person name="Bond P.L."/>
            <person name="Li Y."/>
            <person name="Richardson P."/>
        </authorList>
    </citation>
    <scope>NUCLEOTIDE SEQUENCE [LARGE SCALE GENOMIC DNA]</scope>
    <source>
        <strain>MWYL1</strain>
    </source>
</reference>
<gene>
    <name evidence="1" type="primary">recF</name>
    <name type="ordered locus">Mmwyl1_0003</name>
</gene>
<comment type="function">
    <text evidence="1">The RecF protein is involved in DNA metabolism; it is required for DNA replication and normal SOS inducibility. RecF binds preferentially to single-stranded, linear DNA. It also seems to bind ATP.</text>
</comment>
<comment type="subcellular location">
    <subcellularLocation>
        <location evidence="1">Cytoplasm</location>
    </subcellularLocation>
</comment>
<comment type="similarity">
    <text evidence="1">Belongs to the RecF family.</text>
</comment>